<proteinExistence type="inferred from homology"/>
<dbReference type="EC" id="7.-.-.-" evidence="1"/>
<dbReference type="EMBL" id="BA000031">
    <property type="protein sequence ID" value="BAC60369.1"/>
    <property type="molecule type" value="Genomic_DNA"/>
</dbReference>
<dbReference type="RefSeq" id="NP_798485.1">
    <property type="nucleotide sequence ID" value="NC_004603.1"/>
</dbReference>
<dbReference type="SMR" id="Q87MX0"/>
<dbReference type="DNASU" id="1189618"/>
<dbReference type="GeneID" id="1189618"/>
<dbReference type="KEGG" id="vpa:VP2106"/>
<dbReference type="PATRIC" id="fig|223926.6.peg.2016"/>
<dbReference type="eggNOG" id="COG4659">
    <property type="taxonomic scope" value="Bacteria"/>
</dbReference>
<dbReference type="HOGENOM" id="CLU_077882_1_0_6"/>
<dbReference type="Proteomes" id="UP000002493">
    <property type="component" value="Chromosome 1"/>
</dbReference>
<dbReference type="GO" id="GO:0005886">
    <property type="term" value="C:plasma membrane"/>
    <property type="evidence" value="ECO:0007669"/>
    <property type="project" value="UniProtKB-SubCell"/>
</dbReference>
<dbReference type="GO" id="GO:0009055">
    <property type="term" value="F:electron transfer activity"/>
    <property type="evidence" value="ECO:0007669"/>
    <property type="project" value="InterPro"/>
</dbReference>
<dbReference type="GO" id="GO:0010181">
    <property type="term" value="F:FMN binding"/>
    <property type="evidence" value="ECO:0007669"/>
    <property type="project" value="InterPro"/>
</dbReference>
<dbReference type="GO" id="GO:0022900">
    <property type="term" value="P:electron transport chain"/>
    <property type="evidence" value="ECO:0007669"/>
    <property type="project" value="UniProtKB-UniRule"/>
</dbReference>
<dbReference type="HAMAP" id="MF_00479">
    <property type="entry name" value="RsxG_RnfG"/>
    <property type="match status" value="1"/>
</dbReference>
<dbReference type="InterPro" id="IPR007329">
    <property type="entry name" value="FMN-bd"/>
</dbReference>
<dbReference type="InterPro" id="IPR010209">
    <property type="entry name" value="Ion_transpt_RnfG/RsxG"/>
</dbReference>
<dbReference type="NCBIfam" id="NF002519">
    <property type="entry name" value="PRK01908.1"/>
    <property type="match status" value="1"/>
</dbReference>
<dbReference type="NCBIfam" id="TIGR01947">
    <property type="entry name" value="rnfG"/>
    <property type="match status" value="1"/>
</dbReference>
<dbReference type="PANTHER" id="PTHR36118">
    <property type="entry name" value="ION-TRANSLOCATING OXIDOREDUCTASE COMPLEX SUBUNIT G"/>
    <property type="match status" value="1"/>
</dbReference>
<dbReference type="PANTHER" id="PTHR36118:SF1">
    <property type="entry name" value="ION-TRANSLOCATING OXIDOREDUCTASE COMPLEX SUBUNIT G"/>
    <property type="match status" value="1"/>
</dbReference>
<dbReference type="Pfam" id="PF04205">
    <property type="entry name" value="FMN_bind"/>
    <property type="match status" value="1"/>
</dbReference>
<dbReference type="PIRSF" id="PIRSF006091">
    <property type="entry name" value="E_trnsport_RnfG"/>
    <property type="match status" value="1"/>
</dbReference>
<dbReference type="SMART" id="SM00900">
    <property type="entry name" value="FMN_bind"/>
    <property type="match status" value="1"/>
</dbReference>
<organism>
    <name type="scientific">Vibrio parahaemolyticus serotype O3:K6 (strain RIMD 2210633)</name>
    <dbReference type="NCBI Taxonomy" id="223926"/>
    <lineage>
        <taxon>Bacteria</taxon>
        <taxon>Pseudomonadati</taxon>
        <taxon>Pseudomonadota</taxon>
        <taxon>Gammaproteobacteria</taxon>
        <taxon>Vibrionales</taxon>
        <taxon>Vibrionaceae</taxon>
        <taxon>Vibrio</taxon>
    </lineage>
</organism>
<feature type="chain" id="PRO_0000214643" description="Ion-translocating oxidoreductase complex subunit G">
    <location>
        <begin position="1"/>
        <end position="211"/>
    </location>
</feature>
<feature type="transmembrane region" description="Helical" evidence="1">
    <location>
        <begin position="9"/>
        <end position="29"/>
    </location>
</feature>
<feature type="modified residue" description="FMN phosphoryl threonine" evidence="1">
    <location>
        <position position="175"/>
    </location>
</feature>
<reference key="1">
    <citation type="journal article" date="2003" name="Lancet">
        <title>Genome sequence of Vibrio parahaemolyticus: a pathogenic mechanism distinct from that of V. cholerae.</title>
        <authorList>
            <person name="Makino K."/>
            <person name="Oshima K."/>
            <person name="Kurokawa K."/>
            <person name="Yokoyama K."/>
            <person name="Uda T."/>
            <person name="Tagomori K."/>
            <person name="Iijima Y."/>
            <person name="Najima M."/>
            <person name="Nakano M."/>
            <person name="Yamashita A."/>
            <person name="Kubota Y."/>
            <person name="Kimura S."/>
            <person name="Yasunaga T."/>
            <person name="Honda T."/>
            <person name="Shinagawa H."/>
            <person name="Hattori M."/>
            <person name="Iida T."/>
        </authorList>
    </citation>
    <scope>NUCLEOTIDE SEQUENCE [LARGE SCALE GENOMIC DNA]</scope>
    <source>
        <strain>RIMD 2210633</strain>
    </source>
</reference>
<name>RNFG_VIBPA</name>
<accession>Q87MX0</accession>
<gene>
    <name evidence="1" type="primary">rnfG</name>
    <name type="ordered locus">VP2106</name>
</gene>
<sequence length="211" mass="23015">MLTAIRKNGLTLAIFACATTGLVALTQYLTEDQIKLQEQKQLLSVLNQVIPETMHDNALTQSCTLVTSPELGTMHAMPTYIATKNGEPTAIAIESIAPDGYNGEIKVITGIDNQGKILGTRVLSHQETPGLGDKIDLRVTSWILGFTGKQVTEDNWNSWKVRKDGGDFDQFTGATITPRAVIKAVRNTVNYVNQSRDEILSQPLNCAGDNQ</sequence>
<evidence type="ECO:0000255" key="1">
    <source>
        <dbReference type="HAMAP-Rule" id="MF_00479"/>
    </source>
</evidence>
<comment type="function">
    <text evidence="1">Part of a membrane-bound complex that couples electron transfer with translocation of ions across the membrane.</text>
</comment>
<comment type="cofactor">
    <cofactor evidence="1">
        <name>FMN</name>
        <dbReference type="ChEBI" id="CHEBI:58210"/>
    </cofactor>
</comment>
<comment type="subunit">
    <text evidence="1">The complex is composed of six subunits: RnfA, RnfB, RnfC, RnfD, RnfE and RnfG.</text>
</comment>
<comment type="subcellular location">
    <subcellularLocation>
        <location evidence="1">Cell inner membrane</location>
        <topology evidence="1">Single-pass membrane protein</topology>
    </subcellularLocation>
</comment>
<comment type="similarity">
    <text evidence="1">Belongs to the RnfG family.</text>
</comment>
<protein>
    <recommendedName>
        <fullName evidence="1">Ion-translocating oxidoreductase complex subunit G</fullName>
        <ecNumber evidence="1">7.-.-.-</ecNumber>
    </recommendedName>
    <alternativeName>
        <fullName evidence="1">Rnf electron transport complex subunit G</fullName>
    </alternativeName>
</protein>
<keyword id="KW-0997">Cell inner membrane</keyword>
<keyword id="KW-1003">Cell membrane</keyword>
<keyword id="KW-0249">Electron transport</keyword>
<keyword id="KW-0285">Flavoprotein</keyword>
<keyword id="KW-0288">FMN</keyword>
<keyword id="KW-0472">Membrane</keyword>
<keyword id="KW-0597">Phosphoprotein</keyword>
<keyword id="KW-1278">Translocase</keyword>
<keyword id="KW-0812">Transmembrane</keyword>
<keyword id="KW-1133">Transmembrane helix</keyword>
<keyword id="KW-0813">Transport</keyword>